<feature type="chain" id="PRO_0000461171" description="Uncharacterized protein YGR016C-A">
    <location>
        <begin position="1"/>
        <end position="35"/>
    </location>
</feature>
<feature type="transmembrane region" description="Helical" evidence="1">
    <location>
        <begin position="14"/>
        <end position="34"/>
    </location>
</feature>
<evidence type="ECO:0000255" key="1"/>
<evidence type="ECO:0000269" key="2">
    <source>
    </source>
</evidence>
<evidence type="ECO:0000269" key="3">
    <source>
    </source>
</evidence>
<evidence type="ECO:0000305" key="4"/>
<evidence type="ECO:0000312" key="5">
    <source>
        <dbReference type="SGD" id="S000350096"/>
    </source>
</evidence>
<protein>
    <recommendedName>
        <fullName evidence="4">Uncharacterized protein YGR016C-A</fullName>
    </recommendedName>
</protein>
<gene>
    <name evidence="5" type="ordered locus">YGR016C-A</name>
</gene>
<comment type="subcellular location">
    <subcellularLocation>
        <location evidence="3">Endoplasmic reticulum membrane</location>
        <topology evidence="1">Single-pass membrane protein</topology>
    </subcellularLocation>
</comment>
<comment type="disruption phenotype">
    <text evidence="2">Confers resistance to fluconazole and to osmotic stress.</text>
</comment>
<dbReference type="EMBL" id="BK006941">
    <property type="protein sequence ID" value="DBA54439.1"/>
    <property type="molecule type" value="Genomic_DNA"/>
</dbReference>
<dbReference type="RefSeq" id="NP_001418068.1">
    <property type="nucleotide sequence ID" value="NM_001431139.1"/>
</dbReference>
<dbReference type="GeneID" id="91000623"/>
<dbReference type="SGD" id="S000350096">
    <property type="gene designation" value="YGR016C-A"/>
</dbReference>
<dbReference type="Proteomes" id="UP000002311">
    <property type="component" value="Chromosome VII"/>
</dbReference>
<dbReference type="GO" id="GO:0005789">
    <property type="term" value="C:endoplasmic reticulum membrane"/>
    <property type="evidence" value="ECO:0007669"/>
    <property type="project" value="UniProtKB-SubCell"/>
</dbReference>
<name>YG106_YEAST</name>
<sequence length="35" mass="3974">MAVYSYYPIDMVLLAHLIGIIYLIIILGTLVMLFS</sequence>
<reference key="1">
    <citation type="journal article" date="1997" name="Nature">
        <title>The nucleotide sequence of Saccharomyces cerevisiae chromosome VII.</title>
        <authorList>
            <person name="Tettelin H."/>
            <person name="Agostoni-Carbone M.L."/>
            <person name="Albermann K."/>
            <person name="Albers M."/>
            <person name="Arroyo J."/>
            <person name="Backes U."/>
            <person name="Barreiros T."/>
            <person name="Bertani I."/>
            <person name="Bjourson A.J."/>
            <person name="Brueckner M."/>
            <person name="Bruschi C.V."/>
            <person name="Carignani G."/>
            <person name="Castagnoli L."/>
            <person name="Cerdan E."/>
            <person name="Clemente M.L."/>
            <person name="Coblenz A."/>
            <person name="Coglievina M."/>
            <person name="Coissac E."/>
            <person name="Defoor E."/>
            <person name="Del Bino S."/>
            <person name="Delius H."/>
            <person name="Delneri D."/>
            <person name="de Wergifosse P."/>
            <person name="Dujon B."/>
            <person name="Durand P."/>
            <person name="Entian K.-D."/>
            <person name="Eraso P."/>
            <person name="Escribano V."/>
            <person name="Fabiani L."/>
            <person name="Fartmann B."/>
            <person name="Feroli F."/>
            <person name="Feuermann M."/>
            <person name="Frontali L."/>
            <person name="Garcia-Gonzalez M."/>
            <person name="Garcia-Saez M.I."/>
            <person name="Goffeau A."/>
            <person name="Guerreiro P."/>
            <person name="Hani J."/>
            <person name="Hansen M."/>
            <person name="Hebling U."/>
            <person name="Hernandez K."/>
            <person name="Heumann K."/>
            <person name="Hilger F."/>
            <person name="Hofmann B."/>
            <person name="Indge K.J."/>
            <person name="James C.M."/>
            <person name="Klima R."/>
            <person name="Koetter P."/>
            <person name="Kramer B."/>
            <person name="Kramer W."/>
            <person name="Lauquin G."/>
            <person name="Leuther H."/>
            <person name="Louis E.J."/>
            <person name="Maillier E."/>
            <person name="Marconi A."/>
            <person name="Martegani E."/>
            <person name="Mazon M.J."/>
            <person name="Mazzoni C."/>
            <person name="McReynolds A.D.K."/>
            <person name="Melchioretto P."/>
            <person name="Mewes H.-W."/>
            <person name="Minenkova O."/>
            <person name="Mueller-Auer S."/>
            <person name="Nawrocki A."/>
            <person name="Netter P."/>
            <person name="Neu R."/>
            <person name="Nombela C."/>
            <person name="Oliver S.G."/>
            <person name="Panzeri L."/>
            <person name="Paoluzi S."/>
            <person name="Plevani P."/>
            <person name="Portetelle D."/>
            <person name="Portillo F."/>
            <person name="Potier S."/>
            <person name="Purnelle B."/>
            <person name="Rieger M."/>
            <person name="Riles L."/>
            <person name="Rinaldi T."/>
            <person name="Robben J."/>
            <person name="Rodrigues-Pousada C."/>
            <person name="Rodriguez-Belmonte E."/>
            <person name="Rodriguez-Torres A.M."/>
            <person name="Rose M."/>
            <person name="Ruzzi M."/>
            <person name="Saliola M."/>
            <person name="Sanchez-Perez M."/>
            <person name="Schaefer B."/>
            <person name="Schaefer M."/>
            <person name="Scharfe M."/>
            <person name="Schmidheini T."/>
            <person name="Schreer A."/>
            <person name="Skala J."/>
            <person name="Souciet J.-L."/>
            <person name="Steensma H.Y."/>
            <person name="Talla E."/>
            <person name="Thierry A."/>
            <person name="Vandenbol M."/>
            <person name="van der Aart Q.J.M."/>
            <person name="Van Dyck L."/>
            <person name="Vanoni M."/>
            <person name="Verhasselt P."/>
            <person name="Voet M."/>
            <person name="Volckaert G."/>
            <person name="Wambutt R."/>
            <person name="Watson M.D."/>
            <person name="Weber N."/>
            <person name="Wedler E."/>
            <person name="Wedler H."/>
            <person name="Wipfli P."/>
            <person name="Wolf K."/>
            <person name="Wright L.F."/>
            <person name="Zaccaria P."/>
            <person name="Zimmermann M."/>
            <person name="Zollner A."/>
            <person name="Kleine K."/>
        </authorList>
    </citation>
    <scope>NUCLEOTIDE SEQUENCE [LARGE SCALE GENOMIC DNA]</scope>
    <source>
        <strain>ATCC 204508 / S288c</strain>
    </source>
</reference>
<reference key="2">
    <citation type="journal article" date="2014" name="G3 (Bethesda)">
        <title>The reference genome sequence of Saccharomyces cerevisiae: Then and now.</title>
        <authorList>
            <person name="Engel S.R."/>
            <person name="Dietrich F.S."/>
            <person name="Fisk D.G."/>
            <person name="Binkley G."/>
            <person name="Balakrishnan R."/>
            <person name="Costanzo M.C."/>
            <person name="Dwight S.S."/>
            <person name="Hitz B.C."/>
            <person name="Karra K."/>
            <person name="Nash R.S."/>
            <person name="Weng S."/>
            <person name="Wong E.D."/>
            <person name="Lloyd P."/>
            <person name="Skrzypek M.S."/>
            <person name="Miyasato S.R."/>
            <person name="Simison M."/>
            <person name="Cherry J.M."/>
        </authorList>
    </citation>
    <scope>GENOME REANNOTATION</scope>
    <source>
        <strain>ATCC 204508 / S288c</strain>
    </source>
</reference>
<reference key="3">
    <citation type="journal article" date="2022" name="Genetics">
        <title>New data and collaborations at the Saccharomyces Genome Database: updated reference genome, alleles, and the Alliance of Genome Resources.</title>
        <authorList>
            <person name="Engel S.R."/>
            <person name="Wong E.D."/>
            <person name="Nash R.S."/>
            <person name="Aleksander S."/>
            <person name="Alexander M."/>
            <person name="Douglass E."/>
            <person name="Karra K."/>
            <person name="Miyasato S.R."/>
            <person name="Simison M."/>
            <person name="Skrzypek M.S."/>
            <person name="Weng S."/>
            <person name="Cherry J.M."/>
        </authorList>
    </citation>
    <scope>GENOME REANNOTATION</scope>
    <source>
        <strain>ATCC 204508 / S288c</strain>
    </source>
</reference>
<reference key="4">
    <citation type="journal article" date="2023" name="Cell Syst.">
        <title>A vast evolutionarily transient translatome contributes to phenotype and fitness.</title>
        <authorList>
            <person name="Wacholder A."/>
            <person name="Parikh S.B."/>
            <person name="Coelho N.C."/>
            <person name="Acar O."/>
            <person name="Houghton C."/>
            <person name="Chou L."/>
            <person name="Carvunis A.R."/>
        </authorList>
    </citation>
    <scope>IDENTIFICATION</scope>
    <scope>DISRUPTION PHENOTYPE</scope>
</reference>
<reference key="5">
    <citation type="journal article" date="2023" name="MicroPubl. Biol.">
        <title>Unannotated open reading frame in Saccharomyces cerevisiae encodes protein localizing to the endoplasmic reticulum.</title>
        <authorList>
            <person name="Chang S."/>
            <person name="Joyson M."/>
            <person name="Kelly A."/>
            <person name="Tang L."/>
            <person name="Iannotta J."/>
            <person name="Rich A."/>
            <person name="Castilho Coelho N."/>
            <person name="Carvunis A.R."/>
        </authorList>
    </citation>
    <scope>SUBCELLULAR LOCATION</scope>
</reference>
<proteinExistence type="inferred from homology"/>
<organism>
    <name type="scientific">Saccharomyces cerevisiae (strain ATCC 204508 / S288c)</name>
    <name type="common">Baker's yeast</name>
    <dbReference type="NCBI Taxonomy" id="559292"/>
    <lineage>
        <taxon>Eukaryota</taxon>
        <taxon>Fungi</taxon>
        <taxon>Dikarya</taxon>
        <taxon>Ascomycota</taxon>
        <taxon>Saccharomycotina</taxon>
        <taxon>Saccharomycetes</taxon>
        <taxon>Saccharomycetales</taxon>
        <taxon>Saccharomycetaceae</taxon>
        <taxon>Saccharomyces</taxon>
    </lineage>
</organism>
<keyword id="KW-0256">Endoplasmic reticulum</keyword>
<keyword id="KW-0472">Membrane</keyword>
<keyword id="KW-1185">Reference proteome</keyword>
<keyword id="KW-0812">Transmembrane</keyword>
<keyword id="KW-1133">Transmembrane helix</keyword>
<accession>P9WEJ6</accession>
<accession>A0AAT9JHZ2</accession>